<comment type="function">
    <text evidence="1">NAD-binding protein involved in the addition of a carboxymethylaminomethyl (cmnm) group at the wobble position (U34) of certain tRNAs, forming tRNA-cmnm(5)s(2)U34.</text>
</comment>
<comment type="cofactor">
    <cofactor evidence="1">
        <name>FAD</name>
        <dbReference type="ChEBI" id="CHEBI:57692"/>
    </cofactor>
</comment>
<comment type="subunit">
    <text evidence="1">Homodimer. Heterotetramer of two MnmE and two MnmG subunits.</text>
</comment>
<comment type="subcellular location">
    <subcellularLocation>
        <location evidence="1">Cytoplasm</location>
    </subcellularLocation>
</comment>
<comment type="similarity">
    <text evidence="1">Belongs to the MnmG family.</text>
</comment>
<accession>Q2JI26</accession>
<dbReference type="EMBL" id="CP000240">
    <property type="protein sequence ID" value="ABD03745.1"/>
    <property type="molecule type" value="Genomic_DNA"/>
</dbReference>
<dbReference type="RefSeq" id="WP_011434362.1">
    <property type="nucleotide sequence ID" value="NC_007776.1"/>
</dbReference>
<dbReference type="SMR" id="Q2JI26"/>
<dbReference type="STRING" id="321332.CYB_2823"/>
<dbReference type="KEGG" id="cyb:CYB_2823"/>
<dbReference type="eggNOG" id="COG0445">
    <property type="taxonomic scope" value="Bacteria"/>
</dbReference>
<dbReference type="HOGENOM" id="CLU_007831_2_2_3"/>
<dbReference type="OrthoDB" id="9815560at2"/>
<dbReference type="Proteomes" id="UP000001938">
    <property type="component" value="Chromosome"/>
</dbReference>
<dbReference type="GO" id="GO:0005737">
    <property type="term" value="C:cytoplasm"/>
    <property type="evidence" value="ECO:0007669"/>
    <property type="project" value="UniProtKB-SubCell"/>
</dbReference>
<dbReference type="GO" id="GO:0050660">
    <property type="term" value="F:flavin adenine dinucleotide binding"/>
    <property type="evidence" value="ECO:0007669"/>
    <property type="project" value="UniProtKB-UniRule"/>
</dbReference>
<dbReference type="GO" id="GO:0030488">
    <property type="term" value="P:tRNA methylation"/>
    <property type="evidence" value="ECO:0007669"/>
    <property type="project" value="TreeGrafter"/>
</dbReference>
<dbReference type="GO" id="GO:0002098">
    <property type="term" value="P:tRNA wobble uridine modification"/>
    <property type="evidence" value="ECO:0007669"/>
    <property type="project" value="InterPro"/>
</dbReference>
<dbReference type="FunFam" id="1.10.10.1800:FF:000001">
    <property type="entry name" value="tRNA uridine 5-carboxymethylaminomethyl modification enzyme MnmG"/>
    <property type="match status" value="1"/>
</dbReference>
<dbReference type="FunFam" id="1.10.150.570:FF:000001">
    <property type="entry name" value="tRNA uridine 5-carboxymethylaminomethyl modification enzyme MnmG"/>
    <property type="match status" value="1"/>
</dbReference>
<dbReference type="FunFam" id="3.50.50.60:FF:000094">
    <property type="entry name" value="tRNA uridine 5-carboxymethylaminomethyl modification enzyme MnmG"/>
    <property type="match status" value="1"/>
</dbReference>
<dbReference type="FunFam" id="3.50.50.60:FF:000119">
    <property type="entry name" value="tRNA uridine 5-carboxymethylaminomethyl modification enzyme MnmG"/>
    <property type="match status" value="1"/>
</dbReference>
<dbReference type="Gene3D" id="3.50.50.60">
    <property type="entry name" value="FAD/NAD(P)-binding domain"/>
    <property type="match status" value="2"/>
</dbReference>
<dbReference type="Gene3D" id="1.10.150.570">
    <property type="entry name" value="GidA associated domain, C-terminal subdomain"/>
    <property type="match status" value="1"/>
</dbReference>
<dbReference type="Gene3D" id="1.10.10.1800">
    <property type="entry name" value="tRNA uridine 5-carboxymethylaminomethyl modification enzyme MnmG/GidA"/>
    <property type="match status" value="1"/>
</dbReference>
<dbReference type="HAMAP" id="MF_00129">
    <property type="entry name" value="MnmG_GidA"/>
    <property type="match status" value="1"/>
</dbReference>
<dbReference type="InterPro" id="IPR036188">
    <property type="entry name" value="FAD/NAD-bd_sf"/>
</dbReference>
<dbReference type="InterPro" id="IPR049312">
    <property type="entry name" value="GIDA_C_N"/>
</dbReference>
<dbReference type="InterPro" id="IPR004416">
    <property type="entry name" value="MnmG"/>
</dbReference>
<dbReference type="InterPro" id="IPR002218">
    <property type="entry name" value="MnmG-rel"/>
</dbReference>
<dbReference type="InterPro" id="IPR020595">
    <property type="entry name" value="MnmG-rel_CS"/>
</dbReference>
<dbReference type="InterPro" id="IPR026904">
    <property type="entry name" value="MnmG_C"/>
</dbReference>
<dbReference type="InterPro" id="IPR047001">
    <property type="entry name" value="MnmG_C_subdom"/>
</dbReference>
<dbReference type="InterPro" id="IPR044920">
    <property type="entry name" value="MnmG_C_subdom_sf"/>
</dbReference>
<dbReference type="InterPro" id="IPR040131">
    <property type="entry name" value="MnmG_N"/>
</dbReference>
<dbReference type="NCBIfam" id="TIGR00136">
    <property type="entry name" value="mnmG_gidA"/>
    <property type="match status" value="1"/>
</dbReference>
<dbReference type="PANTHER" id="PTHR11806">
    <property type="entry name" value="GLUCOSE INHIBITED DIVISION PROTEIN A"/>
    <property type="match status" value="1"/>
</dbReference>
<dbReference type="PANTHER" id="PTHR11806:SF0">
    <property type="entry name" value="PROTEIN MTO1 HOMOLOG, MITOCHONDRIAL"/>
    <property type="match status" value="1"/>
</dbReference>
<dbReference type="Pfam" id="PF01134">
    <property type="entry name" value="GIDA"/>
    <property type="match status" value="1"/>
</dbReference>
<dbReference type="Pfam" id="PF21680">
    <property type="entry name" value="GIDA_C_1st"/>
    <property type="match status" value="1"/>
</dbReference>
<dbReference type="Pfam" id="PF13932">
    <property type="entry name" value="SAM_GIDA_C"/>
    <property type="match status" value="1"/>
</dbReference>
<dbReference type="SMART" id="SM01228">
    <property type="entry name" value="GIDA_assoc_3"/>
    <property type="match status" value="1"/>
</dbReference>
<dbReference type="SUPFAM" id="SSF51905">
    <property type="entry name" value="FAD/NAD(P)-binding domain"/>
    <property type="match status" value="1"/>
</dbReference>
<dbReference type="PROSITE" id="PS01280">
    <property type="entry name" value="GIDA_1"/>
    <property type="match status" value="1"/>
</dbReference>
<dbReference type="PROSITE" id="PS01281">
    <property type="entry name" value="GIDA_2"/>
    <property type="match status" value="1"/>
</dbReference>
<evidence type="ECO:0000255" key="1">
    <source>
        <dbReference type="HAMAP-Rule" id="MF_00129"/>
    </source>
</evidence>
<reference key="1">
    <citation type="journal article" date="2007" name="ISME J.">
        <title>Population level functional diversity in a microbial community revealed by comparative genomic and metagenomic analyses.</title>
        <authorList>
            <person name="Bhaya D."/>
            <person name="Grossman A.R."/>
            <person name="Steunou A.-S."/>
            <person name="Khuri N."/>
            <person name="Cohan F.M."/>
            <person name="Hamamura N."/>
            <person name="Melendrez M.C."/>
            <person name="Bateson M.M."/>
            <person name="Ward D.M."/>
            <person name="Heidelberg J.F."/>
        </authorList>
    </citation>
    <scope>NUCLEOTIDE SEQUENCE [LARGE SCALE GENOMIC DNA]</scope>
    <source>
        <strain>JA-2-3B'a(2-13)</strain>
    </source>
</reference>
<organism>
    <name type="scientific">Synechococcus sp. (strain JA-2-3B'a(2-13))</name>
    <name type="common">Cyanobacteria bacterium Yellowstone B-Prime</name>
    <dbReference type="NCBI Taxonomy" id="321332"/>
    <lineage>
        <taxon>Bacteria</taxon>
        <taxon>Bacillati</taxon>
        <taxon>Cyanobacteriota</taxon>
        <taxon>Cyanophyceae</taxon>
        <taxon>Synechococcales</taxon>
        <taxon>Synechococcaceae</taxon>
        <taxon>Synechococcus</taxon>
    </lineage>
</organism>
<name>MNMG_SYNJB</name>
<feature type="chain" id="PRO_0000345345" description="tRNA uridine 5-carboxymethylaminomethyl modification enzyme MnmG">
    <location>
        <begin position="1"/>
        <end position="643"/>
    </location>
</feature>
<feature type="binding site" evidence="1">
    <location>
        <begin position="21"/>
        <end position="26"/>
    </location>
    <ligand>
        <name>FAD</name>
        <dbReference type="ChEBI" id="CHEBI:57692"/>
    </ligand>
</feature>
<feature type="binding site" evidence="1">
    <location>
        <begin position="282"/>
        <end position="296"/>
    </location>
    <ligand>
        <name>NAD(+)</name>
        <dbReference type="ChEBI" id="CHEBI:57540"/>
    </ligand>
</feature>
<sequence length="643" mass="71885">MLRVGRDSIDFLDHYDVVVVGGGHSGCEAALAAARLGCNTLMLTLNLDKIAWQPCNPAVGGPAKSQLVHEIDALGGEMGKVTDRTYLQKRVLNRSRGPAVWALRAQTDKREYARVMRSVVENQPNLTIREGTVTDLVLGRNDEVVGVVTHFGTIFGCRAVILTTGTFLGGRIWIGRHWQAAGRAGEFAVEGLTDTLRQLGFETGRLKTGTPARVDRRSVDFSVMERQPGDPDVRWFSFDPEVWVPREQMDCYLTRTTPETHRIIRENLHETPVYGGWVEAKGPRYCPSIEDKIVRFADKESHQIFIEPEGRDLPELYIQGFSTGMPEKIQIQMLRSLPGLERCVMLRPAYAVEYDYLPATQLYPTLMTKKVQGLFCAGQINGTTGYEEAAAQGLIAGINAARLVQGKPLVTLPRESSYIGTLIDDLCTKELREPYRMLTSRSEYRLILRSDNADQRLTPLGREWGLIDDRRWALFQAKQARIAAEIERLETQRVKAHDLAGIQLSQLTGQGIKGSATLAEILRRNQIHYSDLLELGLGDAELDPFEQEAAEIAVKYSGYIQRQQSQIEQVSKQYHRPLPPDLDYHSIPTLSKESRDKLSAVRPLTVGQAARIGGVNPADINALLIYLEVRQRQRAADPVCSSL</sequence>
<proteinExistence type="inferred from homology"/>
<gene>
    <name evidence="1" type="primary">mnmG</name>
    <name evidence="1" type="synonym">gidA</name>
    <name type="ordered locus">CYB_2823</name>
</gene>
<keyword id="KW-0963">Cytoplasm</keyword>
<keyword id="KW-0274">FAD</keyword>
<keyword id="KW-0285">Flavoprotein</keyword>
<keyword id="KW-0520">NAD</keyword>
<keyword id="KW-1185">Reference proteome</keyword>
<keyword id="KW-0819">tRNA processing</keyword>
<protein>
    <recommendedName>
        <fullName evidence="1">tRNA uridine 5-carboxymethylaminomethyl modification enzyme MnmG</fullName>
    </recommendedName>
    <alternativeName>
        <fullName evidence="1">Glucose-inhibited division protein A</fullName>
    </alternativeName>
</protein>